<organism>
    <name type="scientific">Mycobacterium bovis (strain BCG / Pasteur 1173P2)</name>
    <dbReference type="NCBI Taxonomy" id="410289"/>
    <lineage>
        <taxon>Bacteria</taxon>
        <taxon>Bacillati</taxon>
        <taxon>Actinomycetota</taxon>
        <taxon>Actinomycetes</taxon>
        <taxon>Mycobacteriales</taxon>
        <taxon>Mycobacteriaceae</taxon>
        <taxon>Mycobacterium</taxon>
        <taxon>Mycobacterium tuberculosis complex</taxon>
    </lineage>
</organism>
<keyword id="KW-0963">Cytoplasm</keyword>
<keyword id="KW-0329">Glyoxylate bypass</keyword>
<keyword id="KW-0460">Magnesium</keyword>
<keyword id="KW-0479">Metal-binding</keyword>
<keyword id="KW-0558">Oxidation</keyword>
<keyword id="KW-0808">Transferase</keyword>
<keyword id="KW-0816">Tricarboxylic acid cycle</keyword>
<proteinExistence type="inferred from homology"/>
<comment type="function">
    <text evidence="1">Involved in the glycolate utilization. Catalyzes the condensation and subsequent hydrolysis of acetyl-coenzyme A (acetyl-CoA) and glyoxylate to form malate and CoA.</text>
</comment>
<comment type="catalytic activity">
    <reaction evidence="1">
        <text>glyoxylate + acetyl-CoA + H2O = (S)-malate + CoA + H(+)</text>
        <dbReference type="Rhea" id="RHEA:18181"/>
        <dbReference type="ChEBI" id="CHEBI:15377"/>
        <dbReference type="ChEBI" id="CHEBI:15378"/>
        <dbReference type="ChEBI" id="CHEBI:15589"/>
        <dbReference type="ChEBI" id="CHEBI:36655"/>
        <dbReference type="ChEBI" id="CHEBI:57287"/>
        <dbReference type="ChEBI" id="CHEBI:57288"/>
        <dbReference type="EC" id="2.3.3.9"/>
    </reaction>
</comment>
<comment type="cofactor">
    <cofactor evidence="1">
        <name>Mg(2+)</name>
        <dbReference type="ChEBI" id="CHEBI:18420"/>
    </cofactor>
</comment>
<comment type="pathway">
    <text evidence="1">Carbohydrate metabolism; glyoxylate cycle; (S)-malate from isocitrate: step 2/2.</text>
</comment>
<comment type="subunit">
    <text evidence="1">Monomer.</text>
</comment>
<comment type="subcellular location">
    <subcellularLocation>
        <location evidence="1">Cytoplasm</location>
    </subcellularLocation>
</comment>
<comment type="similarity">
    <text evidence="1">Belongs to the malate synthase family. GlcB subfamily.</text>
</comment>
<sequence>MTDRVSVGNLRIARVLYDFVNNEALPGTDIDPDSFWAGVDKVVADLTPQNQALLNARDELQAQIDKWHRRRVIEPIDMDAYRQFLTEIGYLLPEPDDFTITTSGVDAEITTTAGPQLVVPVLNARFALNAANARWGSLYDALYGTDVIPETDGAEKGPTYNKVRGDKVIAYARKFLDDSVPLSSGSFGDATGFTVQDGQLVVALPDKSTGLANPGQFAGYTGAAESPTSVLLINHGLHIEILIDPESQVGTTDRAGVKDVILESAITTIMDFEDSVAAVDAADKVLGYRNWLGLNKGDLAAAVDKDGTAFLRVLNRDRNYTAPGGGQFTLPGRSLMFVRNVGHLMTNDAIVDTDGSEVFEGIMDALFTGLIAIHGLKASDVNGPLINSRTGSIYIVKPKMHGPAEVAFTCELFSRVEDVLGLPQNTMKIGIMDEERRTTVNLKACIKAAADRVVFINTGFLDRTGDEIHTSMEAGPMVRKGTMKSQPWILAYEDHNVDAGLAAGFSGRAQVGKGMWTMTELMADMVETKIAQPRAGASTAWVPSPTAATLHALHYHQVDVAAVQQGLAGKRRATIEQLLTIPLAKELAWAPDEIREEVDNNCQSILGYVVRWVDQGVGCSKVPDIHDVALMEDRATLRISSQLLANWLRHGVITSADVRASLERMAPLVDRQNAGDVAYRPMAPNFDDSIAFLAAQELILSGAQQPNGYTEPILHRRRREFKARAAEKPAPSDRAGDDAAR</sequence>
<protein>
    <recommendedName>
        <fullName evidence="1">Malate synthase G</fullName>
        <ecNumber evidence="1">2.3.3.9</ecNumber>
    </recommendedName>
</protein>
<reference key="1">
    <citation type="journal article" date="2007" name="Proc. Natl. Acad. Sci. U.S.A.">
        <title>Genome plasticity of BCG and impact on vaccine efficacy.</title>
        <authorList>
            <person name="Brosch R."/>
            <person name="Gordon S.V."/>
            <person name="Garnier T."/>
            <person name="Eiglmeier K."/>
            <person name="Frigui W."/>
            <person name="Valenti P."/>
            <person name="Dos Santos S."/>
            <person name="Duthoy S."/>
            <person name="Lacroix C."/>
            <person name="Garcia-Pelayo C."/>
            <person name="Inwald J.K."/>
            <person name="Golby P."/>
            <person name="Garcia J.N."/>
            <person name="Hewinson R.G."/>
            <person name="Behr M.A."/>
            <person name="Quail M.A."/>
            <person name="Churcher C."/>
            <person name="Barrell B.G."/>
            <person name="Parkhill J."/>
            <person name="Cole S.T."/>
        </authorList>
    </citation>
    <scope>NUCLEOTIDE SEQUENCE [LARGE SCALE GENOMIC DNA]</scope>
    <source>
        <strain>BCG / Pasteur 1173P2</strain>
    </source>
</reference>
<name>MASZ_MYCBP</name>
<accession>A1KJP9</accession>
<feature type="chain" id="PRO_1000056905" description="Malate synthase G">
    <location>
        <begin position="1"/>
        <end position="741"/>
    </location>
</feature>
<feature type="region of interest" description="Disordered" evidence="2">
    <location>
        <begin position="718"/>
        <end position="741"/>
    </location>
</feature>
<feature type="compositionally biased region" description="Basic and acidic residues" evidence="2">
    <location>
        <begin position="722"/>
        <end position="741"/>
    </location>
</feature>
<feature type="active site" description="Proton acceptor" evidence="1">
    <location>
        <position position="339"/>
    </location>
</feature>
<feature type="active site" description="Proton donor" evidence="1">
    <location>
        <position position="633"/>
    </location>
</feature>
<feature type="binding site" evidence="1">
    <location>
        <position position="118"/>
    </location>
    <ligand>
        <name>acetyl-CoA</name>
        <dbReference type="ChEBI" id="CHEBI:57288"/>
    </ligand>
</feature>
<feature type="binding site" evidence="1">
    <location>
        <begin position="125"/>
        <end position="126"/>
    </location>
    <ligand>
        <name>acetyl-CoA</name>
        <dbReference type="ChEBI" id="CHEBI:57288"/>
    </ligand>
</feature>
<feature type="binding site" evidence="1">
    <location>
        <position position="275"/>
    </location>
    <ligand>
        <name>acetyl-CoA</name>
        <dbReference type="ChEBI" id="CHEBI:57288"/>
    </ligand>
</feature>
<feature type="binding site" evidence="1">
    <location>
        <position position="312"/>
    </location>
    <ligand>
        <name>acetyl-CoA</name>
        <dbReference type="ChEBI" id="CHEBI:57288"/>
    </ligand>
</feature>
<feature type="binding site" evidence="1">
    <location>
        <position position="339"/>
    </location>
    <ligand>
        <name>glyoxylate</name>
        <dbReference type="ChEBI" id="CHEBI:36655"/>
    </ligand>
</feature>
<feature type="binding site" evidence="1">
    <location>
        <position position="434"/>
    </location>
    <ligand>
        <name>glyoxylate</name>
        <dbReference type="ChEBI" id="CHEBI:36655"/>
    </ligand>
</feature>
<feature type="binding site" evidence="1">
    <location>
        <position position="434"/>
    </location>
    <ligand>
        <name>Mg(2+)</name>
        <dbReference type="ChEBI" id="CHEBI:18420"/>
    </ligand>
</feature>
<feature type="binding site" evidence="1">
    <location>
        <begin position="459"/>
        <end position="462"/>
    </location>
    <ligand>
        <name>glyoxylate</name>
        <dbReference type="ChEBI" id="CHEBI:36655"/>
    </ligand>
</feature>
<feature type="binding site" evidence="1">
    <location>
        <position position="462"/>
    </location>
    <ligand>
        <name>Mg(2+)</name>
        <dbReference type="ChEBI" id="CHEBI:18420"/>
    </ligand>
</feature>
<feature type="binding site" evidence="1">
    <location>
        <position position="543"/>
    </location>
    <ligand>
        <name>acetyl-CoA</name>
        <dbReference type="ChEBI" id="CHEBI:57288"/>
    </ligand>
</feature>
<feature type="modified residue" description="Cysteine sulfenic acid (-SOH)" evidence="1">
    <location>
        <position position="619"/>
    </location>
</feature>
<gene>
    <name evidence="1" type="primary">glcB</name>
    <name type="ordered locus">BCG_1872c</name>
</gene>
<evidence type="ECO:0000255" key="1">
    <source>
        <dbReference type="HAMAP-Rule" id="MF_00641"/>
    </source>
</evidence>
<evidence type="ECO:0000256" key="2">
    <source>
        <dbReference type="SAM" id="MobiDB-lite"/>
    </source>
</evidence>
<dbReference type="EC" id="2.3.3.9" evidence="1"/>
<dbReference type="EMBL" id="AM408590">
    <property type="protein sequence ID" value="CAL71859.1"/>
    <property type="molecule type" value="Genomic_DNA"/>
</dbReference>
<dbReference type="RefSeq" id="WP_003409271.1">
    <property type="nucleotide sequence ID" value="NC_008769.1"/>
</dbReference>
<dbReference type="SMR" id="A1KJP9"/>
<dbReference type="KEGG" id="mbb:BCG_1872c"/>
<dbReference type="HOGENOM" id="CLU_028446_1_0_11"/>
<dbReference type="UniPathway" id="UPA00703">
    <property type="reaction ID" value="UER00720"/>
</dbReference>
<dbReference type="Proteomes" id="UP000001472">
    <property type="component" value="Chromosome"/>
</dbReference>
<dbReference type="GO" id="GO:0005829">
    <property type="term" value="C:cytosol"/>
    <property type="evidence" value="ECO:0007669"/>
    <property type="project" value="TreeGrafter"/>
</dbReference>
<dbReference type="GO" id="GO:0000287">
    <property type="term" value="F:magnesium ion binding"/>
    <property type="evidence" value="ECO:0007669"/>
    <property type="project" value="TreeGrafter"/>
</dbReference>
<dbReference type="GO" id="GO:0004474">
    <property type="term" value="F:malate synthase activity"/>
    <property type="evidence" value="ECO:0007669"/>
    <property type="project" value="UniProtKB-UniRule"/>
</dbReference>
<dbReference type="GO" id="GO:0009436">
    <property type="term" value="P:glyoxylate catabolic process"/>
    <property type="evidence" value="ECO:0007669"/>
    <property type="project" value="TreeGrafter"/>
</dbReference>
<dbReference type="GO" id="GO:0006097">
    <property type="term" value="P:glyoxylate cycle"/>
    <property type="evidence" value="ECO:0007669"/>
    <property type="project" value="UniProtKB-UniRule"/>
</dbReference>
<dbReference type="GO" id="GO:0006099">
    <property type="term" value="P:tricarboxylic acid cycle"/>
    <property type="evidence" value="ECO:0007669"/>
    <property type="project" value="UniProtKB-KW"/>
</dbReference>
<dbReference type="CDD" id="cd00728">
    <property type="entry name" value="malate_synt_G"/>
    <property type="match status" value="1"/>
</dbReference>
<dbReference type="FunFam" id="3.20.20.360:FF:000002">
    <property type="entry name" value="Malate synthase G"/>
    <property type="match status" value="1"/>
</dbReference>
<dbReference type="Gene3D" id="3.20.20.360">
    <property type="entry name" value="Malate synthase, domain 3"/>
    <property type="match status" value="2"/>
</dbReference>
<dbReference type="Gene3D" id="1.20.1220.12">
    <property type="entry name" value="Malate synthase, domain III"/>
    <property type="match status" value="1"/>
</dbReference>
<dbReference type="HAMAP" id="MF_00641">
    <property type="entry name" value="Malate_synth_G"/>
    <property type="match status" value="1"/>
</dbReference>
<dbReference type="InterPro" id="IPR044856">
    <property type="entry name" value="Malate_synth_C_sf"/>
</dbReference>
<dbReference type="InterPro" id="IPR011076">
    <property type="entry name" value="Malate_synth_sf"/>
</dbReference>
<dbReference type="InterPro" id="IPR001465">
    <property type="entry name" value="Malate_synthase_TIM"/>
</dbReference>
<dbReference type="InterPro" id="IPR006253">
    <property type="entry name" value="Malate_synthG"/>
</dbReference>
<dbReference type="InterPro" id="IPR048355">
    <property type="entry name" value="MS_C"/>
</dbReference>
<dbReference type="InterPro" id="IPR048356">
    <property type="entry name" value="MS_N"/>
</dbReference>
<dbReference type="InterPro" id="IPR046363">
    <property type="entry name" value="MS_N_TIM-barrel_dom"/>
</dbReference>
<dbReference type="InterPro" id="IPR048357">
    <property type="entry name" value="MSG_insertion"/>
</dbReference>
<dbReference type="NCBIfam" id="TIGR01345">
    <property type="entry name" value="malate_syn_G"/>
    <property type="match status" value="1"/>
</dbReference>
<dbReference type="NCBIfam" id="NF002825">
    <property type="entry name" value="PRK02999.1"/>
    <property type="match status" value="1"/>
</dbReference>
<dbReference type="PANTHER" id="PTHR42739">
    <property type="entry name" value="MALATE SYNTHASE G"/>
    <property type="match status" value="1"/>
</dbReference>
<dbReference type="PANTHER" id="PTHR42739:SF1">
    <property type="entry name" value="MALATE SYNTHASE G"/>
    <property type="match status" value="1"/>
</dbReference>
<dbReference type="Pfam" id="PF20659">
    <property type="entry name" value="MS_C"/>
    <property type="match status" value="1"/>
</dbReference>
<dbReference type="Pfam" id="PF20656">
    <property type="entry name" value="MS_N"/>
    <property type="match status" value="1"/>
</dbReference>
<dbReference type="Pfam" id="PF01274">
    <property type="entry name" value="MS_TIM-barrel"/>
    <property type="match status" value="1"/>
</dbReference>
<dbReference type="Pfam" id="PF20658">
    <property type="entry name" value="MSG_insertion"/>
    <property type="match status" value="1"/>
</dbReference>
<dbReference type="SUPFAM" id="SSF51645">
    <property type="entry name" value="Malate synthase G"/>
    <property type="match status" value="1"/>
</dbReference>